<gene>
    <name type="primary">tma7</name>
    <name type="synonym">ccdc72</name>
    <name type="ORF">GSTENG00012505001</name>
</gene>
<protein>
    <recommendedName>
        <fullName>Translation machinery-associated protein 7</fullName>
    </recommendedName>
    <alternativeName>
        <fullName>Coiled-coil domain-containing protein 72</fullName>
    </alternativeName>
</protein>
<sequence length="64" mass="6859">MSGREGGKKKPLKAPKKQSKDMDDDDVAFKQKQKEDQKAMEALKARASGKGPLGGSGIKKSGKK</sequence>
<proteinExistence type="inferred from homology"/>
<name>TMA7_TETNG</name>
<organism>
    <name type="scientific">Tetraodon nigroviridis</name>
    <name type="common">Spotted green pufferfish</name>
    <name type="synonym">Chelonodon nigroviridis</name>
    <dbReference type="NCBI Taxonomy" id="99883"/>
    <lineage>
        <taxon>Eukaryota</taxon>
        <taxon>Metazoa</taxon>
        <taxon>Chordata</taxon>
        <taxon>Craniata</taxon>
        <taxon>Vertebrata</taxon>
        <taxon>Euteleostomi</taxon>
        <taxon>Actinopterygii</taxon>
        <taxon>Neopterygii</taxon>
        <taxon>Teleostei</taxon>
        <taxon>Neoteleostei</taxon>
        <taxon>Acanthomorphata</taxon>
        <taxon>Eupercaria</taxon>
        <taxon>Tetraodontiformes</taxon>
        <taxon>Tetradontoidea</taxon>
        <taxon>Tetraodontidae</taxon>
        <taxon>Tetraodon</taxon>
    </lineage>
</organism>
<keyword id="KW-0175">Coiled coil</keyword>
<keyword id="KW-1185">Reference proteome</keyword>
<reference key="1">
    <citation type="journal article" date="2004" name="Nature">
        <title>Genome duplication in the teleost fish Tetraodon nigroviridis reveals the early vertebrate proto-karyotype.</title>
        <authorList>
            <person name="Jaillon O."/>
            <person name="Aury J.-M."/>
            <person name="Brunet F."/>
            <person name="Petit J.-L."/>
            <person name="Stange-Thomann N."/>
            <person name="Mauceli E."/>
            <person name="Bouneau L."/>
            <person name="Fischer C."/>
            <person name="Ozouf-Costaz C."/>
            <person name="Bernot A."/>
            <person name="Nicaud S."/>
            <person name="Jaffe D."/>
            <person name="Fisher S."/>
            <person name="Lutfalla G."/>
            <person name="Dossat C."/>
            <person name="Segurens B."/>
            <person name="Dasilva C."/>
            <person name="Salanoubat M."/>
            <person name="Levy M."/>
            <person name="Boudet N."/>
            <person name="Castellano S."/>
            <person name="Anthouard V."/>
            <person name="Jubin C."/>
            <person name="Castelli V."/>
            <person name="Katinka M."/>
            <person name="Vacherie B."/>
            <person name="Biemont C."/>
            <person name="Skalli Z."/>
            <person name="Cattolico L."/>
            <person name="Poulain J."/>
            <person name="De Berardinis V."/>
            <person name="Cruaud C."/>
            <person name="Duprat S."/>
            <person name="Brottier P."/>
            <person name="Coutanceau J.-P."/>
            <person name="Gouzy J."/>
            <person name="Parra G."/>
            <person name="Lardier G."/>
            <person name="Chapple C."/>
            <person name="McKernan K.J."/>
            <person name="McEwan P."/>
            <person name="Bosak S."/>
            <person name="Kellis M."/>
            <person name="Volff J.-N."/>
            <person name="Guigo R."/>
            <person name="Zody M.C."/>
            <person name="Mesirov J."/>
            <person name="Lindblad-Toh K."/>
            <person name="Birren B."/>
            <person name="Nusbaum C."/>
            <person name="Kahn D."/>
            <person name="Robinson-Rechavi M."/>
            <person name="Laudet V."/>
            <person name="Schachter V."/>
            <person name="Quetier F."/>
            <person name="Saurin W."/>
            <person name="Scarpelli C."/>
            <person name="Wincker P."/>
            <person name="Lander E.S."/>
            <person name="Weissenbach J."/>
            <person name="Roest Crollius H."/>
        </authorList>
    </citation>
    <scope>NUCLEOTIDE SEQUENCE [LARGE SCALE GENOMIC DNA]</scope>
</reference>
<comment type="similarity">
    <text evidence="3">Belongs to the TMA7 family.</text>
</comment>
<dbReference type="EMBL" id="CAAE01013964">
    <property type="protein sequence ID" value="CAF95740.1"/>
    <property type="molecule type" value="Genomic_DNA"/>
</dbReference>
<dbReference type="FunCoup" id="Q4SUE2">
    <property type="interactions" value="806"/>
</dbReference>
<dbReference type="STRING" id="99883.ENSTNIP00000009338"/>
<dbReference type="Ensembl" id="ENSTNIT00000009509.1">
    <property type="protein sequence ID" value="ENSTNIP00000009338.1"/>
    <property type="gene ID" value="ENSTNIG00000006564.1"/>
</dbReference>
<dbReference type="KEGG" id="tng:GSTEN00012505G001"/>
<dbReference type="GeneTree" id="ENSGT00940000168313"/>
<dbReference type="HOGENOM" id="CLU_184661_2_0_1"/>
<dbReference type="InParanoid" id="Q4SUE2"/>
<dbReference type="OMA" id="CFANCIY"/>
<dbReference type="TreeFam" id="TF300250"/>
<dbReference type="Proteomes" id="UP000007303">
    <property type="component" value="Unassembled WGS sequence"/>
</dbReference>
<dbReference type="InterPro" id="IPR015157">
    <property type="entry name" value="TMA7"/>
</dbReference>
<dbReference type="PANTHER" id="PTHR28632">
    <property type="entry name" value="TRANSLATION MACHINERY-ASSOCIATED PROTEIN 7"/>
    <property type="match status" value="1"/>
</dbReference>
<dbReference type="Pfam" id="PF09072">
    <property type="entry name" value="TMA7"/>
    <property type="match status" value="1"/>
</dbReference>
<evidence type="ECO:0000255" key="1"/>
<evidence type="ECO:0000256" key="2">
    <source>
        <dbReference type="SAM" id="MobiDB-lite"/>
    </source>
</evidence>
<evidence type="ECO:0000305" key="3"/>
<feature type="chain" id="PRO_0000248074" description="Translation machinery-associated protein 7">
    <location>
        <begin position="1"/>
        <end position="64"/>
    </location>
</feature>
<feature type="region of interest" description="Disordered" evidence="2">
    <location>
        <begin position="1"/>
        <end position="64"/>
    </location>
</feature>
<feature type="coiled-coil region" evidence="1">
    <location>
        <begin position="21"/>
        <end position="50"/>
    </location>
</feature>
<feature type="compositionally biased region" description="Basic and acidic residues" evidence="2">
    <location>
        <begin position="27"/>
        <end position="44"/>
    </location>
</feature>
<accession>Q4SUE2</accession>